<gene>
    <name evidence="1" type="primary">atpA</name>
    <name type="ordered locus">Cj0105</name>
</gene>
<proteinExistence type="inferred from homology"/>
<reference key="1">
    <citation type="journal article" date="2000" name="Nature">
        <title>The genome sequence of the food-borne pathogen Campylobacter jejuni reveals hypervariable sequences.</title>
        <authorList>
            <person name="Parkhill J."/>
            <person name="Wren B.W."/>
            <person name="Mungall K.L."/>
            <person name="Ketley J.M."/>
            <person name="Churcher C.M."/>
            <person name="Basham D."/>
            <person name="Chillingworth T."/>
            <person name="Davies R.M."/>
            <person name="Feltwell T."/>
            <person name="Holroyd S."/>
            <person name="Jagels K."/>
            <person name="Karlyshev A.V."/>
            <person name="Moule S."/>
            <person name="Pallen M.J."/>
            <person name="Penn C.W."/>
            <person name="Quail M.A."/>
            <person name="Rajandream M.A."/>
            <person name="Rutherford K.M."/>
            <person name="van Vliet A.H.M."/>
            <person name="Whitehead S."/>
            <person name="Barrell B.G."/>
        </authorList>
    </citation>
    <scope>NUCLEOTIDE SEQUENCE [LARGE SCALE GENOMIC DNA]</scope>
    <source>
        <strain>ATCC 700819 / NCTC 11168</strain>
    </source>
</reference>
<evidence type="ECO:0000255" key="1">
    <source>
        <dbReference type="HAMAP-Rule" id="MF_01346"/>
    </source>
</evidence>
<name>ATPA_CAMJE</name>
<keyword id="KW-0066">ATP synthesis</keyword>
<keyword id="KW-0067">ATP-binding</keyword>
<keyword id="KW-0997">Cell inner membrane</keyword>
<keyword id="KW-1003">Cell membrane</keyword>
<keyword id="KW-0139">CF(1)</keyword>
<keyword id="KW-0375">Hydrogen ion transport</keyword>
<keyword id="KW-0406">Ion transport</keyword>
<keyword id="KW-0472">Membrane</keyword>
<keyword id="KW-0547">Nucleotide-binding</keyword>
<keyword id="KW-1185">Reference proteome</keyword>
<keyword id="KW-1278">Translocase</keyword>
<keyword id="KW-0813">Transport</keyword>
<accession>Q9PJ21</accession>
<accession>Q0PC32</accession>
<organism>
    <name type="scientific">Campylobacter jejuni subsp. jejuni serotype O:2 (strain ATCC 700819 / NCTC 11168)</name>
    <dbReference type="NCBI Taxonomy" id="192222"/>
    <lineage>
        <taxon>Bacteria</taxon>
        <taxon>Pseudomonadati</taxon>
        <taxon>Campylobacterota</taxon>
        <taxon>Epsilonproteobacteria</taxon>
        <taxon>Campylobacterales</taxon>
        <taxon>Campylobacteraceae</taxon>
        <taxon>Campylobacter</taxon>
    </lineage>
</organism>
<feature type="chain" id="PRO_0000238226" description="ATP synthase subunit alpha">
    <location>
        <begin position="1"/>
        <end position="501"/>
    </location>
</feature>
<feature type="binding site" evidence="1">
    <location>
        <begin position="169"/>
        <end position="176"/>
    </location>
    <ligand>
        <name>ATP</name>
        <dbReference type="ChEBI" id="CHEBI:30616"/>
    </ligand>
</feature>
<feature type="site" description="Required for activity" evidence="1">
    <location>
        <position position="362"/>
    </location>
</feature>
<sequence length="501" mass="54801">MKFKADEISSIIKERIENFDLNLEIEETGKIISVADGVAKVYGLKNIMAGEMVEFENGDKGMALNLEESSVGIVILGKGEGLKEGASVKRLKKLLKVPVGEALIGRVVNALGEPIDAKGVINANEYRFVEEKAKGIMARKSVHEPLHTGIKAIDALVPIGRGQRELIIGDRQTGKTTVAVDTIISQRGQGVICIYVAIGQKQSTVAQVVKRLEEHGAMEYTIVVNAGASDPAALQYLAPYTGVTMGEFFRDNAKHALIVYDDLSKHAVAYREMSLILRRPPGREAYPGDVFYLHSRLLERASKLNDELGAGSLTALPIIETQAGDVSAYIPTNVISITDGQIFLETDLFNSGIRPAINVGLSVSRVGGAAQIKATKQVSGTLRLDLAQYRELQAFAQFASDLDEASRKQLERGQRMVELLKQPPYSPLSVEKQVVLIFAGTKGFLDDIAVSRIKEFEDGIYPFIEAKHPDIFEQIRSKKALDSDLEEKLAKAINEFKANHL</sequence>
<dbReference type="EC" id="7.1.2.2" evidence="1"/>
<dbReference type="EMBL" id="AL111168">
    <property type="protein sequence ID" value="CAL34276.1"/>
    <property type="molecule type" value="Genomic_DNA"/>
</dbReference>
<dbReference type="PIR" id="A81427">
    <property type="entry name" value="A81427"/>
</dbReference>
<dbReference type="RefSeq" id="WP_002851836.1">
    <property type="nucleotide sequence ID" value="NZ_SZUC01000005.1"/>
</dbReference>
<dbReference type="RefSeq" id="YP_002343565.1">
    <property type="nucleotide sequence ID" value="NC_002163.1"/>
</dbReference>
<dbReference type="SMR" id="Q9PJ21"/>
<dbReference type="STRING" id="192222.Cj0105"/>
<dbReference type="PaxDb" id="192222-Cj0105"/>
<dbReference type="EnsemblBacteria" id="CAL34276">
    <property type="protein sequence ID" value="CAL34276"/>
    <property type="gene ID" value="Cj0105"/>
</dbReference>
<dbReference type="GeneID" id="904435"/>
<dbReference type="KEGG" id="cje:Cj0105"/>
<dbReference type="PATRIC" id="fig|192222.6.peg.103"/>
<dbReference type="eggNOG" id="COG0056">
    <property type="taxonomic scope" value="Bacteria"/>
</dbReference>
<dbReference type="HOGENOM" id="CLU_010091_2_1_7"/>
<dbReference type="OrthoDB" id="9803053at2"/>
<dbReference type="Proteomes" id="UP000000799">
    <property type="component" value="Chromosome"/>
</dbReference>
<dbReference type="GO" id="GO:0005886">
    <property type="term" value="C:plasma membrane"/>
    <property type="evidence" value="ECO:0007669"/>
    <property type="project" value="UniProtKB-SubCell"/>
</dbReference>
<dbReference type="GO" id="GO:0045259">
    <property type="term" value="C:proton-transporting ATP synthase complex"/>
    <property type="evidence" value="ECO:0007669"/>
    <property type="project" value="UniProtKB-KW"/>
</dbReference>
<dbReference type="GO" id="GO:0043531">
    <property type="term" value="F:ADP binding"/>
    <property type="evidence" value="ECO:0007669"/>
    <property type="project" value="TreeGrafter"/>
</dbReference>
<dbReference type="GO" id="GO:0005524">
    <property type="term" value="F:ATP binding"/>
    <property type="evidence" value="ECO:0007669"/>
    <property type="project" value="UniProtKB-UniRule"/>
</dbReference>
<dbReference type="GO" id="GO:0046933">
    <property type="term" value="F:proton-transporting ATP synthase activity, rotational mechanism"/>
    <property type="evidence" value="ECO:0007669"/>
    <property type="project" value="UniProtKB-UniRule"/>
</dbReference>
<dbReference type="CDD" id="cd18113">
    <property type="entry name" value="ATP-synt_F1_alpha_C"/>
    <property type="match status" value="1"/>
</dbReference>
<dbReference type="CDD" id="cd18116">
    <property type="entry name" value="ATP-synt_F1_alpha_N"/>
    <property type="match status" value="1"/>
</dbReference>
<dbReference type="CDD" id="cd01132">
    <property type="entry name" value="F1-ATPase_alpha_CD"/>
    <property type="match status" value="1"/>
</dbReference>
<dbReference type="FunFam" id="1.20.150.20:FF:000001">
    <property type="entry name" value="ATP synthase subunit alpha"/>
    <property type="match status" value="1"/>
</dbReference>
<dbReference type="FunFam" id="2.40.30.20:FF:000001">
    <property type="entry name" value="ATP synthase subunit alpha"/>
    <property type="match status" value="1"/>
</dbReference>
<dbReference type="FunFam" id="3.40.50.300:FF:000002">
    <property type="entry name" value="ATP synthase subunit alpha"/>
    <property type="match status" value="1"/>
</dbReference>
<dbReference type="Gene3D" id="2.40.30.20">
    <property type="match status" value="1"/>
</dbReference>
<dbReference type="Gene3D" id="1.20.150.20">
    <property type="entry name" value="ATP synthase alpha/beta chain, C-terminal domain"/>
    <property type="match status" value="1"/>
</dbReference>
<dbReference type="Gene3D" id="3.40.50.300">
    <property type="entry name" value="P-loop containing nucleotide triphosphate hydrolases"/>
    <property type="match status" value="1"/>
</dbReference>
<dbReference type="HAMAP" id="MF_01346">
    <property type="entry name" value="ATP_synth_alpha_bact"/>
    <property type="match status" value="1"/>
</dbReference>
<dbReference type="InterPro" id="IPR023366">
    <property type="entry name" value="ATP_synth_asu-like_sf"/>
</dbReference>
<dbReference type="InterPro" id="IPR000793">
    <property type="entry name" value="ATP_synth_asu_C"/>
</dbReference>
<dbReference type="InterPro" id="IPR038376">
    <property type="entry name" value="ATP_synth_asu_C_sf"/>
</dbReference>
<dbReference type="InterPro" id="IPR033732">
    <property type="entry name" value="ATP_synth_F1_a_nt-bd_dom"/>
</dbReference>
<dbReference type="InterPro" id="IPR005294">
    <property type="entry name" value="ATP_synth_F1_asu"/>
</dbReference>
<dbReference type="InterPro" id="IPR020003">
    <property type="entry name" value="ATPase_a/bsu_AS"/>
</dbReference>
<dbReference type="InterPro" id="IPR004100">
    <property type="entry name" value="ATPase_F1/V1/A1_a/bsu_N"/>
</dbReference>
<dbReference type="InterPro" id="IPR036121">
    <property type="entry name" value="ATPase_F1/V1/A1_a/bsu_N_sf"/>
</dbReference>
<dbReference type="InterPro" id="IPR000194">
    <property type="entry name" value="ATPase_F1/V1/A1_a/bsu_nucl-bd"/>
</dbReference>
<dbReference type="InterPro" id="IPR027417">
    <property type="entry name" value="P-loop_NTPase"/>
</dbReference>
<dbReference type="NCBIfam" id="TIGR00962">
    <property type="entry name" value="atpA"/>
    <property type="match status" value="1"/>
</dbReference>
<dbReference type="NCBIfam" id="NF009884">
    <property type="entry name" value="PRK13343.1"/>
    <property type="match status" value="1"/>
</dbReference>
<dbReference type="PANTHER" id="PTHR48082">
    <property type="entry name" value="ATP SYNTHASE SUBUNIT ALPHA, MITOCHONDRIAL"/>
    <property type="match status" value="1"/>
</dbReference>
<dbReference type="PANTHER" id="PTHR48082:SF2">
    <property type="entry name" value="ATP SYNTHASE SUBUNIT ALPHA, MITOCHONDRIAL"/>
    <property type="match status" value="1"/>
</dbReference>
<dbReference type="Pfam" id="PF00006">
    <property type="entry name" value="ATP-synt_ab"/>
    <property type="match status" value="1"/>
</dbReference>
<dbReference type="Pfam" id="PF00306">
    <property type="entry name" value="ATP-synt_ab_C"/>
    <property type="match status" value="1"/>
</dbReference>
<dbReference type="Pfam" id="PF02874">
    <property type="entry name" value="ATP-synt_ab_N"/>
    <property type="match status" value="1"/>
</dbReference>
<dbReference type="PIRSF" id="PIRSF039088">
    <property type="entry name" value="F_ATPase_subunit_alpha"/>
    <property type="match status" value="1"/>
</dbReference>
<dbReference type="SUPFAM" id="SSF47917">
    <property type="entry name" value="C-terminal domain of alpha and beta subunits of F1 ATP synthase"/>
    <property type="match status" value="1"/>
</dbReference>
<dbReference type="SUPFAM" id="SSF50615">
    <property type="entry name" value="N-terminal domain of alpha and beta subunits of F1 ATP synthase"/>
    <property type="match status" value="1"/>
</dbReference>
<dbReference type="SUPFAM" id="SSF52540">
    <property type="entry name" value="P-loop containing nucleoside triphosphate hydrolases"/>
    <property type="match status" value="1"/>
</dbReference>
<dbReference type="PROSITE" id="PS00152">
    <property type="entry name" value="ATPASE_ALPHA_BETA"/>
    <property type="match status" value="1"/>
</dbReference>
<protein>
    <recommendedName>
        <fullName evidence="1">ATP synthase subunit alpha</fullName>
        <ecNumber evidence="1">7.1.2.2</ecNumber>
    </recommendedName>
    <alternativeName>
        <fullName evidence="1">ATP synthase F1 sector subunit alpha</fullName>
    </alternativeName>
    <alternativeName>
        <fullName evidence="1">F-ATPase subunit alpha</fullName>
    </alternativeName>
</protein>
<comment type="function">
    <text evidence="1">Produces ATP from ADP in the presence of a proton gradient across the membrane. The alpha chain is a regulatory subunit.</text>
</comment>
<comment type="catalytic activity">
    <reaction evidence="1">
        <text>ATP + H2O + 4 H(+)(in) = ADP + phosphate + 5 H(+)(out)</text>
        <dbReference type="Rhea" id="RHEA:57720"/>
        <dbReference type="ChEBI" id="CHEBI:15377"/>
        <dbReference type="ChEBI" id="CHEBI:15378"/>
        <dbReference type="ChEBI" id="CHEBI:30616"/>
        <dbReference type="ChEBI" id="CHEBI:43474"/>
        <dbReference type="ChEBI" id="CHEBI:456216"/>
        <dbReference type="EC" id="7.1.2.2"/>
    </reaction>
</comment>
<comment type="subunit">
    <text evidence="1">F-type ATPases have 2 components, CF(1) - the catalytic core - and CF(0) - the membrane proton channel. CF(1) has five subunits: alpha(3), beta(3), gamma(1), delta(1), epsilon(1). CF(0) has three main subunits: a(1), b(2) and c(9-12). The alpha and beta chains form an alternating ring which encloses part of the gamma chain. CF(1) is attached to CF(0) by a central stalk formed by the gamma and epsilon chains, while a peripheral stalk is formed by the delta and b chains.</text>
</comment>
<comment type="subcellular location">
    <subcellularLocation>
        <location evidence="1">Cell inner membrane</location>
        <topology evidence="1">Peripheral membrane protein</topology>
    </subcellularLocation>
</comment>
<comment type="similarity">
    <text evidence="1">Belongs to the ATPase alpha/beta chains family.</text>
</comment>